<proteinExistence type="inferred from homology"/>
<protein>
    <recommendedName>
        <fullName evidence="1">DNA-binding transcriptional regulator NtrC</fullName>
    </recommendedName>
    <alternativeName>
        <fullName evidence="1">Nitrogen regulation protein NR(I)</fullName>
    </alternativeName>
    <alternativeName>
        <fullName evidence="1">Nitrogen regulator I</fullName>
        <shortName evidence="1">NRI</shortName>
    </alternativeName>
</protein>
<evidence type="ECO:0000250" key="1">
    <source>
        <dbReference type="UniProtKB" id="P0AFB8"/>
    </source>
</evidence>
<name>NTRC_VIBAL</name>
<dbReference type="EMBL" id="L08499">
    <property type="protein sequence ID" value="AAA27525.1"/>
    <property type="molecule type" value="Genomic_DNA"/>
</dbReference>
<dbReference type="PIR" id="PL0151">
    <property type="entry name" value="PL0151"/>
</dbReference>
<dbReference type="STRING" id="663.BAU10_15715"/>
<dbReference type="eggNOG" id="COG2204">
    <property type="taxonomic scope" value="Bacteria"/>
</dbReference>
<dbReference type="GO" id="GO:0005737">
    <property type="term" value="C:cytoplasm"/>
    <property type="evidence" value="ECO:0007669"/>
    <property type="project" value="UniProtKB-SubCell"/>
</dbReference>
<dbReference type="GO" id="GO:0005524">
    <property type="term" value="F:ATP binding"/>
    <property type="evidence" value="ECO:0007669"/>
    <property type="project" value="UniProtKB-KW"/>
</dbReference>
<dbReference type="GO" id="GO:0003677">
    <property type="term" value="F:DNA binding"/>
    <property type="evidence" value="ECO:0007669"/>
    <property type="project" value="UniProtKB-KW"/>
</dbReference>
<dbReference type="GO" id="GO:0009399">
    <property type="term" value="P:nitrogen fixation"/>
    <property type="evidence" value="ECO:0007669"/>
    <property type="project" value="UniProtKB-KW"/>
</dbReference>
<dbReference type="GO" id="GO:0000160">
    <property type="term" value="P:phosphorelay signal transduction system"/>
    <property type="evidence" value="ECO:0007669"/>
    <property type="project" value="UniProtKB-KW"/>
</dbReference>
<gene>
    <name type="primary">ntrC</name>
</gene>
<organism>
    <name type="scientific">Vibrio alginolyticus</name>
    <dbReference type="NCBI Taxonomy" id="663"/>
    <lineage>
        <taxon>Bacteria</taxon>
        <taxon>Pseudomonadati</taxon>
        <taxon>Pseudomonadota</taxon>
        <taxon>Gammaproteobacteria</taxon>
        <taxon>Vibrionales</taxon>
        <taxon>Vibrionaceae</taxon>
        <taxon>Vibrio</taxon>
    </lineage>
</organism>
<keyword id="KW-0010">Activator</keyword>
<keyword id="KW-0067">ATP-binding</keyword>
<keyword id="KW-0963">Cytoplasm</keyword>
<keyword id="KW-0238">DNA-binding</keyword>
<keyword id="KW-0535">Nitrogen fixation</keyword>
<keyword id="KW-0547">Nucleotide-binding</keyword>
<keyword id="KW-0597">Phosphoprotein</keyword>
<keyword id="KW-0678">Repressor</keyword>
<keyword id="KW-0804">Transcription</keyword>
<keyword id="KW-0805">Transcription regulation</keyword>
<keyword id="KW-0902">Two-component regulatory system</keyword>
<feature type="chain" id="PRO_0000081175" description="DNA-binding transcriptional regulator NtrC">
    <location>
        <begin position="1"/>
        <end position="27" status="greater than"/>
    </location>
</feature>
<feature type="non-terminal residue">
    <location>
        <position position="27"/>
    </location>
</feature>
<sequence length="27" mass="3128">MSKGYVWVVDDDSSIRWVMEKTSPLPT</sequence>
<reference key="1">
    <citation type="journal article" date="1989" name="Arch. Microbiol.">
        <title>Nucleotide sequence of the Vibrio alginolyticus glnA region.</title>
        <authorList>
            <person name="Maharaj R."/>
            <person name="Rumbak E."/>
            <person name="Jones W.A."/>
            <person name="Robb S.M."/>
            <person name="Robb F.T."/>
            <person name="Woods D.R."/>
        </authorList>
    </citation>
    <scope>NUCLEOTIDE SEQUENCE [GENOMIC DNA]</scope>
</reference>
<comment type="function">
    <text evidence="1">Member of the two-component regulatory system NtrB/NtrC, which controls expression of the nitrogen-regulated (ntr) genes in response to nitrogen limitation. Phosphorylated NtrC binds directly to DNA and stimulates the formation of open promoter-sigma54-RNA polymerase complexes.</text>
</comment>
<comment type="subcellular location">
    <subcellularLocation>
        <location evidence="1">Cytoplasm</location>
    </subcellularLocation>
</comment>
<comment type="PTM">
    <text evidence="1">Phosphorylated and dephosphorylated by NtrB.</text>
</comment>
<accession>P19905</accession>